<accession>B1XGW0</accession>
<evidence type="ECO:0000255" key="1">
    <source>
        <dbReference type="HAMAP-Rule" id="MF_00048"/>
    </source>
</evidence>
<evidence type="ECO:0000256" key="2">
    <source>
        <dbReference type="SAM" id="MobiDB-lite"/>
    </source>
</evidence>
<proteinExistence type="inferred from homology"/>
<protein>
    <recommendedName>
        <fullName evidence="1">UPF0102 protein YraN</fullName>
    </recommendedName>
</protein>
<gene>
    <name evidence="1" type="primary">yraN</name>
    <name type="ordered locus">ECDH10B_3321</name>
</gene>
<reference key="1">
    <citation type="journal article" date="2008" name="J. Bacteriol.">
        <title>The complete genome sequence of Escherichia coli DH10B: insights into the biology of a laboratory workhorse.</title>
        <authorList>
            <person name="Durfee T."/>
            <person name="Nelson R."/>
            <person name="Baldwin S."/>
            <person name="Plunkett G. III"/>
            <person name="Burland V."/>
            <person name="Mau B."/>
            <person name="Petrosino J.F."/>
            <person name="Qin X."/>
            <person name="Muzny D.M."/>
            <person name="Ayele M."/>
            <person name="Gibbs R.A."/>
            <person name="Csorgo B."/>
            <person name="Posfai G."/>
            <person name="Weinstock G.M."/>
            <person name="Blattner F.R."/>
        </authorList>
    </citation>
    <scope>NUCLEOTIDE SEQUENCE [LARGE SCALE GENOMIC DNA]</scope>
    <source>
        <strain>K12 / DH10B</strain>
    </source>
</reference>
<organism>
    <name type="scientific">Escherichia coli (strain K12 / DH10B)</name>
    <dbReference type="NCBI Taxonomy" id="316385"/>
    <lineage>
        <taxon>Bacteria</taxon>
        <taxon>Pseudomonadati</taxon>
        <taxon>Pseudomonadota</taxon>
        <taxon>Gammaproteobacteria</taxon>
        <taxon>Enterobacterales</taxon>
        <taxon>Enterobacteriaceae</taxon>
        <taxon>Escherichia</taxon>
    </lineage>
</organism>
<comment type="similarity">
    <text evidence="1">Belongs to the UPF0102 family.</text>
</comment>
<name>YRAN_ECODH</name>
<sequence>MATVPTRSGSPRQLTTKQTGDAWEAQARRWLEGKGLRFIAANVNERGGEIDLIMREGRTTIFVEVRYRRSALYGGAAASVTRSKQHKLLQTARLWLARHNGSFDTVDCRFDVVAFTGNEVEWIKDAFNDHS</sequence>
<dbReference type="EMBL" id="CP000948">
    <property type="protein sequence ID" value="ACB04227.1"/>
    <property type="molecule type" value="Genomic_DNA"/>
</dbReference>
<dbReference type="RefSeq" id="WP_000246830.1">
    <property type="nucleotide sequence ID" value="NC_010473.1"/>
</dbReference>
<dbReference type="SMR" id="B1XGW0"/>
<dbReference type="KEGG" id="ecd:ECDH10B_3321"/>
<dbReference type="HOGENOM" id="CLU_115353_1_0_6"/>
<dbReference type="GO" id="GO:0003676">
    <property type="term" value="F:nucleic acid binding"/>
    <property type="evidence" value="ECO:0007669"/>
    <property type="project" value="InterPro"/>
</dbReference>
<dbReference type="CDD" id="cd20736">
    <property type="entry name" value="PoNe_Nuclease"/>
    <property type="match status" value="1"/>
</dbReference>
<dbReference type="Gene3D" id="3.40.1350.10">
    <property type="match status" value="1"/>
</dbReference>
<dbReference type="HAMAP" id="MF_00048">
    <property type="entry name" value="UPF0102"/>
    <property type="match status" value="1"/>
</dbReference>
<dbReference type="InterPro" id="IPR011335">
    <property type="entry name" value="Restrct_endonuc-II-like"/>
</dbReference>
<dbReference type="InterPro" id="IPR011856">
    <property type="entry name" value="tRNA_endonuc-like_dom_sf"/>
</dbReference>
<dbReference type="InterPro" id="IPR003509">
    <property type="entry name" value="UPF0102_YraN-like"/>
</dbReference>
<dbReference type="NCBIfam" id="NF009150">
    <property type="entry name" value="PRK12497.1-3"/>
    <property type="match status" value="1"/>
</dbReference>
<dbReference type="NCBIfam" id="TIGR00252">
    <property type="entry name" value="YraN family protein"/>
    <property type="match status" value="1"/>
</dbReference>
<dbReference type="PANTHER" id="PTHR34039">
    <property type="entry name" value="UPF0102 PROTEIN YRAN"/>
    <property type="match status" value="1"/>
</dbReference>
<dbReference type="PANTHER" id="PTHR34039:SF1">
    <property type="entry name" value="UPF0102 PROTEIN YRAN"/>
    <property type="match status" value="1"/>
</dbReference>
<dbReference type="Pfam" id="PF02021">
    <property type="entry name" value="UPF0102"/>
    <property type="match status" value="1"/>
</dbReference>
<dbReference type="SUPFAM" id="SSF52980">
    <property type="entry name" value="Restriction endonuclease-like"/>
    <property type="match status" value="1"/>
</dbReference>
<feature type="chain" id="PRO_1000091238" description="UPF0102 protein YraN">
    <location>
        <begin position="1"/>
        <end position="131"/>
    </location>
</feature>
<feature type="region of interest" description="Disordered" evidence="2">
    <location>
        <begin position="1"/>
        <end position="21"/>
    </location>
</feature>
<feature type="compositionally biased region" description="Polar residues" evidence="2">
    <location>
        <begin position="1"/>
        <end position="19"/>
    </location>
</feature>